<feature type="chain" id="PRO_1000185686" description="Carboxy-S-adenosyl-L-methionine synthase">
    <location>
        <begin position="1"/>
        <end position="234"/>
    </location>
</feature>
<feature type="binding site" evidence="1">
    <location>
        <position position="35"/>
    </location>
    <ligand>
        <name>S-adenosyl-L-methionine</name>
        <dbReference type="ChEBI" id="CHEBI:59789"/>
    </ligand>
</feature>
<feature type="binding site" evidence="1">
    <location>
        <begin position="60"/>
        <end position="62"/>
    </location>
    <ligand>
        <name>S-adenosyl-L-methionine</name>
        <dbReference type="ChEBI" id="CHEBI:59789"/>
    </ligand>
</feature>
<feature type="binding site" evidence="1">
    <location>
        <begin position="83"/>
        <end position="84"/>
    </location>
    <ligand>
        <name>S-adenosyl-L-methionine</name>
        <dbReference type="ChEBI" id="CHEBI:59789"/>
    </ligand>
</feature>
<feature type="binding site" evidence="1">
    <location>
        <position position="124"/>
    </location>
    <ligand>
        <name>S-adenosyl-L-methionine</name>
        <dbReference type="ChEBI" id="CHEBI:59789"/>
    </ligand>
</feature>
<feature type="binding site" evidence="1">
    <location>
        <position position="191"/>
    </location>
    <ligand>
        <name>S-adenosyl-L-methionine</name>
        <dbReference type="ChEBI" id="CHEBI:59789"/>
    </ligand>
</feature>
<gene>
    <name evidence="1" type="primary">cmoA</name>
    <name type="ordered locus">NAMH_0888</name>
</gene>
<organism>
    <name type="scientific">Nautilia profundicola (strain ATCC BAA-1463 / DSM 18972 / AmH)</name>
    <dbReference type="NCBI Taxonomy" id="598659"/>
    <lineage>
        <taxon>Bacteria</taxon>
        <taxon>Pseudomonadati</taxon>
        <taxon>Campylobacterota</taxon>
        <taxon>Epsilonproteobacteria</taxon>
        <taxon>Nautiliales</taxon>
        <taxon>Nautiliaceae</taxon>
        <taxon>Nautilia</taxon>
    </lineage>
</organism>
<evidence type="ECO:0000255" key="1">
    <source>
        <dbReference type="HAMAP-Rule" id="MF_01589"/>
    </source>
</evidence>
<accession>B9L9I3</accession>
<reference key="1">
    <citation type="journal article" date="2009" name="PLoS Genet.">
        <title>Adaptations to submarine hydrothermal environments exemplified by the genome of Nautilia profundicola.</title>
        <authorList>
            <person name="Campbell B.J."/>
            <person name="Smith J.L."/>
            <person name="Hanson T.E."/>
            <person name="Klotz M.G."/>
            <person name="Stein L.Y."/>
            <person name="Lee C.K."/>
            <person name="Wu D."/>
            <person name="Robinson J.M."/>
            <person name="Khouri H.M."/>
            <person name="Eisen J.A."/>
            <person name="Cary S.C."/>
        </authorList>
    </citation>
    <scope>NUCLEOTIDE SEQUENCE [LARGE SCALE GENOMIC DNA]</scope>
    <source>
        <strain>ATCC BAA-1463 / DSM 18972 / AmH</strain>
    </source>
</reference>
<protein>
    <recommendedName>
        <fullName evidence="1">Carboxy-S-adenosyl-L-methionine synthase</fullName>
        <shortName evidence="1">Cx-SAM synthase</shortName>
        <ecNumber evidence="1">2.1.3.-</ecNumber>
    </recommendedName>
</protein>
<name>CMOA_NAUPA</name>
<sequence length="234" mass="27418">MEDKVFNKPIEKQFEFDEEVASVFDDMLNRSVPFYKENLNLQIDILKNFLSDQDKIIDLGSSTGTFLIELAKKKENLDLIGIDNSEAMIKRAKNKARAFGVKVEFINSDFLEYDLSGSKAIVANYTVQFIRPLKREKLIKKIYDSLKNDGIFLMSEKLITENKKLNKIMIDIYYDYKKQMGYSEFEIAQKREALENVLIPYTMQENIEMLKNAGFKEIEVVFRWNNFATFIAFK</sequence>
<comment type="function">
    <text evidence="1">Catalyzes the conversion of S-adenosyl-L-methionine (SAM) to carboxy-S-adenosyl-L-methionine (Cx-SAM).</text>
</comment>
<comment type="catalytic activity">
    <reaction evidence="1">
        <text>prephenate + S-adenosyl-L-methionine = carboxy-S-adenosyl-L-methionine + 3-phenylpyruvate + H2O</text>
        <dbReference type="Rhea" id="RHEA:51692"/>
        <dbReference type="ChEBI" id="CHEBI:15377"/>
        <dbReference type="ChEBI" id="CHEBI:18005"/>
        <dbReference type="ChEBI" id="CHEBI:29934"/>
        <dbReference type="ChEBI" id="CHEBI:59789"/>
        <dbReference type="ChEBI" id="CHEBI:134278"/>
    </reaction>
</comment>
<comment type="subunit">
    <text evidence="1">Homodimer.</text>
</comment>
<comment type="similarity">
    <text evidence="1">Belongs to the class I-like SAM-binding methyltransferase superfamily. Cx-SAM synthase family.</text>
</comment>
<dbReference type="EC" id="2.1.3.-" evidence="1"/>
<dbReference type="EMBL" id="CP001279">
    <property type="protein sequence ID" value="ACM92914.1"/>
    <property type="molecule type" value="Genomic_DNA"/>
</dbReference>
<dbReference type="RefSeq" id="WP_015901966.1">
    <property type="nucleotide sequence ID" value="NC_012115.1"/>
</dbReference>
<dbReference type="SMR" id="B9L9I3"/>
<dbReference type="STRING" id="598659.NAMH_0888"/>
<dbReference type="KEGG" id="nam:NAMH_0888"/>
<dbReference type="eggNOG" id="COG2226">
    <property type="taxonomic scope" value="Bacteria"/>
</dbReference>
<dbReference type="HOGENOM" id="CLU_078475_0_0_7"/>
<dbReference type="OrthoDB" id="5386938at2"/>
<dbReference type="Proteomes" id="UP000000448">
    <property type="component" value="Chromosome"/>
</dbReference>
<dbReference type="GO" id="GO:0016743">
    <property type="term" value="F:carboxyl- or carbamoyltransferase activity"/>
    <property type="evidence" value="ECO:0007669"/>
    <property type="project" value="UniProtKB-UniRule"/>
</dbReference>
<dbReference type="GO" id="GO:1904047">
    <property type="term" value="F:S-adenosyl-L-methionine binding"/>
    <property type="evidence" value="ECO:0007669"/>
    <property type="project" value="UniProtKB-UniRule"/>
</dbReference>
<dbReference type="GO" id="GO:0002098">
    <property type="term" value="P:tRNA wobble uridine modification"/>
    <property type="evidence" value="ECO:0007669"/>
    <property type="project" value="InterPro"/>
</dbReference>
<dbReference type="CDD" id="cd02440">
    <property type="entry name" value="AdoMet_MTases"/>
    <property type="match status" value="1"/>
</dbReference>
<dbReference type="Gene3D" id="3.40.50.150">
    <property type="entry name" value="Vaccinia Virus protein VP39"/>
    <property type="match status" value="1"/>
</dbReference>
<dbReference type="HAMAP" id="MF_01589">
    <property type="entry name" value="Cx_SAM_synthase"/>
    <property type="match status" value="1"/>
</dbReference>
<dbReference type="InterPro" id="IPR005271">
    <property type="entry name" value="CmoA"/>
</dbReference>
<dbReference type="InterPro" id="IPR041698">
    <property type="entry name" value="Methyltransf_25"/>
</dbReference>
<dbReference type="InterPro" id="IPR029063">
    <property type="entry name" value="SAM-dependent_MTases_sf"/>
</dbReference>
<dbReference type="NCBIfam" id="TIGR00740">
    <property type="entry name" value="carboxy-S-adenosyl-L-methionine synthase CmoA"/>
    <property type="match status" value="1"/>
</dbReference>
<dbReference type="PANTHER" id="PTHR43861:SF2">
    <property type="entry name" value="CARBOXY-S-ADENOSYL-L-METHIONINE SYNTHASE"/>
    <property type="match status" value="1"/>
</dbReference>
<dbReference type="PANTHER" id="PTHR43861">
    <property type="entry name" value="TRANS-ACONITATE 2-METHYLTRANSFERASE-RELATED"/>
    <property type="match status" value="1"/>
</dbReference>
<dbReference type="Pfam" id="PF13649">
    <property type="entry name" value="Methyltransf_25"/>
    <property type="match status" value="1"/>
</dbReference>
<dbReference type="PIRSF" id="PIRSF006325">
    <property type="entry name" value="MeTrfase_bac"/>
    <property type="match status" value="1"/>
</dbReference>
<dbReference type="SUPFAM" id="SSF53335">
    <property type="entry name" value="S-adenosyl-L-methionine-dependent methyltransferases"/>
    <property type="match status" value="1"/>
</dbReference>
<keyword id="KW-0949">S-adenosyl-L-methionine</keyword>
<keyword id="KW-0808">Transferase</keyword>
<proteinExistence type="inferred from homology"/>